<comment type="catalytic activity">
    <reaction evidence="1">
        <text>2-(N(omega)-L-arginino)succinate = fumarate + L-arginine</text>
        <dbReference type="Rhea" id="RHEA:24020"/>
        <dbReference type="ChEBI" id="CHEBI:29806"/>
        <dbReference type="ChEBI" id="CHEBI:32682"/>
        <dbReference type="ChEBI" id="CHEBI:57472"/>
        <dbReference type="EC" id="4.3.2.1"/>
    </reaction>
</comment>
<comment type="pathway">
    <text evidence="1">Amino-acid biosynthesis; L-arginine biosynthesis; L-arginine from L-ornithine and carbamoyl phosphate: step 3/3.</text>
</comment>
<comment type="subcellular location">
    <subcellularLocation>
        <location evidence="1">Cytoplasm</location>
    </subcellularLocation>
</comment>
<comment type="similarity">
    <text evidence="1">Belongs to the lyase 1 family. Argininosuccinate lyase subfamily.</text>
</comment>
<protein>
    <recommendedName>
        <fullName evidence="1">Argininosuccinate lyase</fullName>
        <shortName evidence="1">ASAL</shortName>
        <ecNumber evidence="1">4.3.2.1</ecNumber>
    </recommendedName>
    <alternativeName>
        <fullName evidence="1">Arginosuccinase</fullName>
    </alternativeName>
</protein>
<reference key="1">
    <citation type="journal article" date="2007" name="PLoS ONE">
        <title>Analysis of the neurotoxin complex genes in Clostridium botulinum A1-A4 and B1 strains: BoNT/A3, /Ba4 and /B1 clusters are located within plasmids.</title>
        <authorList>
            <person name="Smith T.J."/>
            <person name="Hill K.K."/>
            <person name="Foley B.T."/>
            <person name="Detter J.C."/>
            <person name="Munk A.C."/>
            <person name="Bruce D.C."/>
            <person name="Doggett N.A."/>
            <person name="Smith L.A."/>
            <person name="Marks J.D."/>
            <person name="Xie G."/>
            <person name="Brettin T.S."/>
        </authorList>
    </citation>
    <scope>NUCLEOTIDE SEQUENCE [LARGE SCALE GENOMIC DNA]</scope>
    <source>
        <strain>Loch Maree / Type A3</strain>
    </source>
</reference>
<sequence length="440" mass="50295">MKLWGGRFKEEESKLMEDFNSSLSFDKKLYYEDIKGSIAHVKMLVNQDIIKEEEKEKILLGLEGILKEIDGGILKIEGDYEDIHSFVEINLINKIGDVGKKLHTGRSRNDQVALDMKLYAKKSTEEVIECLKGLMDSLIKVGNENNYIMPGYTHLQRAQVVTFRYHLLAYFEMFKRDEKRLKNALEILNESPLGSGALAGSTYNIDREYTAKLLGFRKPVDNFLDGVSDRDYIIELISKFSIIMMHLSRLSEELILWSSSEFRFIQIGDAYSTGSSIMPQKKNPDGAELIRGKTGRVYGDLISILTVMKSLPLAYNKDMQEDKEPFFDAKDTVISCLKVMEGIISTLKVNKENLMKSVKKGFLNATEAADYLVNKGMAFRDAHKVIGEIVIYCEDKNSAIEDLSLEELKQFSDLFCEDIYEFIDYKNSINKGIKKEMGYF</sequence>
<keyword id="KW-0028">Amino-acid biosynthesis</keyword>
<keyword id="KW-0055">Arginine biosynthesis</keyword>
<keyword id="KW-0963">Cytoplasm</keyword>
<keyword id="KW-0456">Lyase</keyword>
<organism>
    <name type="scientific">Clostridium botulinum (strain Loch Maree / Type A3)</name>
    <dbReference type="NCBI Taxonomy" id="498214"/>
    <lineage>
        <taxon>Bacteria</taxon>
        <taxon>Bacillati</taxon>
        <taxon>Bacillota</taxon>
        <taxon>Clostridia</taxon>
        <taxon>Eubacteriales</taxon>
        <taxon>Clostridiaceae</taxon>
        <taxon>Clostridium</taxon>
    </lineage>
</organism>
<proteinExistence type="inferred from homology"/>
<gene>
    <name evidence="1" type="primary">argH</name>
    <name type="ordered locus">CLK_2057</name>
</gene>
<name>ARLY_CLOBM</name>
<accession>B1KXY0</accession>
<evidence type="ECO:0000255" key="1">
    <source>
        <dbReference type="HAMAP-Rule" id="MF_00006"/>
    </source>
</evidence>
<dbReference type="EC" id="4.3.2.1" evidence="1"/>
<dbReference type="EMBL" id="CP000962">
    <property type="protein sequence ID" value="ACA55715.1"/>
    <property type="molecule type" value="Genomic_DNA"/>
</dbReference>
<dbReference type="RefSeq" id="WP_012343664.1">
    <property type="nucleotide sequence ID" value="NC_010520.1"/>
</dbReference>
<dbReference type="SMR" id="B1KXY0"/>
<dbReference type="KEGG" id="cbl:CLK_2057"/>
<dbReference type="HOGENOM" id="CLU_027272_2_3_9"/>
<dbReference type="UniPathway" id="UPA00068">
    <property type="reaction ID" value="UER00114"/>
</dbReference>
<dbReference type="GO" id="GO:0005829">
    <property type="term" value="C:cytosol"/>
    <property type="evidence" value="ECO:0007669"/>
    <property type="project" value="TreeGrafter"/>
</dbReference>
<dbReference type="GO" id="GO:0004056">
    <property type="term" value="F:argininosuccinate lyase activity"/>
    <property type="evidence" value="ECO:0007669"/>
    <property type="project" value="UniProtKB-UniRule"/>
</dbReference>
<dbReference type="GO" id="GO:0042450">
    <property type="term" value="P:arginine biosynthetic process via ornithine"/>
    <property type="evidence" value="ECO:0007669"/>
    <property type="project" value="InterPro"/>
</dbReference>
<dbReference type="GO" id="GO:0006526">
    <property type="term" value="P:L-arginine biosynthetic process"/>
    <property type="evidence" value="ECO:0007669"/>
    <property type="project" value="UniProtKB-UniRule"/>
</dbReference>
<dbReference type="CDD" id="cd01359">
    <property type="entry name" value="Argininosuccinate_lyase"/>
    <property type="match status" value="1"/>
</dbReference>
<dbReference type="FunFam" id="1.10.275.10:FF:000002">
    <property type="entry name" value="Argininosuccinate lyase"/>
    <property type="match status" value="1"/>
</dbReference>
<dbReference type="FunFam" id="1.10.40.30:FF:000001">
    <property type="entry name" value="Argininosuccinate lyase"/>
    <property type="match status" value="1"/>
</dbReference>
<dbReference type="FunFam" id="1.20.200.10:FF:000002">
    <property type="entry name" value="Argininosuccinate lyase"/>
    <property type="match status" value="1"/>
</dbReference>
<dbReference type="Gene3D" id="1.10.40.30">
    <property type="entry name" value="Fumarase/aspartase (C-terminal domain)"/>
    <property type="match status" value="1"/>
</dbReference>
<dbReference type="Gene3D" id="1.20.200.10">
    <property type="entry name" value="Fumarase/aspartase (Central domain)"/>
    <property type="match status" value="1"/>
</dbReference>
<dbReference type="Gene3D" id="1.10.275.10">
    <property type="entry name" value="Fumarase/aspartase (N-terminal domain)"/>
    <property type="match status" value="1"/>
</dbReference>
<dbReference type="HAMAP" id="MF_00006">
    <property type="entry name" value="Arg_succ_lyase"/>
    <property type="match status" value="1"/>
</dbReference>
<dbReference type="InterPro" id="IPR029419">
    <property type="entry name" value="Arg_succ_lyase_C"/>
</dbReference>
<dbReference type="InterPro" id="IPR009049">
    <property type="entry name" value="Argininosuccinate_lyase"/>
</dbReference>
<dbReference type="InterPro" id="IPR024083">
    <property type="entry name" value="Fumarase/histidase_N"/>
</dbReference>
<dbReference type="InterPro" id="IPR020557">
    <property type="entry name" value="Fumarate_lyase_CS"/>
</dbReference>
<dbReference type="InterPro" id="IPR000362">
    <property type="entry name" value="Fumarate_lyase_fam"/>
</dbReference>
<dbReference type="InterPro" id="IPR022761">
    <property type="entry name" value="Fumarate_lyase_N"/>
</dbReference>
<dbReference type="InterPro" id="IPR008948">
    <property type="entry name" value="L-Aspartase-like"/>
</dbReference>
<dbReference type="NCBIfam" id="TIGR00838">
    <property type="entry name" value="argH"/>
    <property type="match status" value="1"/>
</dbReference>
<dbReference type="PANTHER" id="PTHR43814">
    <property type="entry name" value="ARGININOSUCCINATE LYASE"/>
    <property type="match status" value="1"/>
</dbReference>
<dbReference type="PANTHER" id="PTHR43814:SF1">
    <property type="entry name" value="ARGININOSUCCINATE LYASE"/>
    <property type="match status" value="1"/>
</dbReference>
<dbReference type="Pfam" id="PF14698">
    <property type="entry name" value="ASL_C2"/>
    <property type="match status" value="1"/>
</dbReference>
<dbReference type="Pfam" id="PF00206">
    <property type="entry name" value="Lyase_1"/>
    <property type="match status" value="1"/>
</dbReference>
<dbReference type="PRINTS" id="PR00145">
    <property type="entry name" value="ARGSUCLYASE"/>
</dbReference>
<dbReference type="PRINTS" id="PR00149">
    <property type="entry name" value="FUMRATELYASE"/>
</dbReference>
<dbReference type="SUPFAM" id="SSF48557">
    <property type="entry name" value="L-aspartase-like"/>
    <property type="match status" value="1"/>
</dbReference>
<dbReference type="PROSITE" id="PS00163">
    <property type="entry name" value="FUMARATE_LYASES"/>
    <property type="match status" value="1"/>
</dbReference>
<feature type="chain" id="PRO_1000089077" description="Argininosuccinate lyase">
    <location>
        <begin position="1"/>
        <end position="440"/>
    </location>
</feature>